<keyword id="KW-0067">ATP-binding</keyword>
<keyword id="KW-0963">Cytoplasm</keyword>
<keyword id="KW-0436">Ligase</keyword>
<keyword id="KW-0547">Nucleotide-binding</keyword>
<keyword id="KW-0819">tRNA processing</keyword>
<protein>
    <recommendedName>
        <fullName evidence="1">tRNA(Ile2) 2-agmatinylcytidine synthetase TiaS</fullName>
        <shortName evidence="1">tRNA(Ile2)-agm2C synthetase</shortName>
        <ecNumber evidence="1">6.3.4.22</ecNumber>
    </recommendedName>
    <alternativeName>
        <fullName evidence="1">tRNA(Ile2) agmatidine synthetase</fullName>
    </alternativeName>
</protein>
<proteinExistence type="inferred from homology"/>
<organism>
    <name type="scientific">Thermoplasma volcanium (strain ATCC 51530 / DSM 4299 / JCM 9571 / NBRC 15438 / GSS1)</name>
    <dbReference type="NCBI Taxonomy" id="273116"/>
    <lineage>
        <taxon>Archaea</taxon>
        <taxon>Methanobacteriati</taxon>
        <taxon>Thermoplasmatota</taxon>
        <taxon>Thermoplasmata</taxon>
        <taxon>Thermoplasmatales</taxon>
        <taxon>Thermoplasmataceae</taxon>
        <taxon>Thermoplasma</taxon>
    </lineage>
</organism>
<feature type="chain" id="PRO_0000407306" description="tRNA(Ile2) 2-agmatinylcytidine synthetase TiaS">
    <location>
        <begin position="1"/>
        <end position="437"/>
    </location>
</feature>
<accession>Q97B59</accession>
<dbReference type="EC" id="6.3.4.22" evidence="1"/>
<dbReference type="EMBL" id="BA000011">
    <property type="protein sequence ID" value="BAB59741.1"/>
    <property type="molecule type" value="Genomic_DNA"/>
</dbReference>
<dbReference type="RefSeq" id="WP_010916857.1">
    <property type="nucleotide sequence ID" value="NC_002689.2"/>
</dbReference>
<dbReference type="SMR" id="Q97B59"/>
<dbReference type="STRING" id="273116.gene:9381387"/>
<dbReference type="PaxDb" id="273116-14324814"/>
<dbReference type="GeneID" id="1441705"/>
<dbReference type="KEGG" id="tvo:TVG0590669"/>
<dbReference type="eggNOG" id="arCOG01115">
    <property type="taxonomic scope" value="Archaea"/>
</dbReference>
<dbReference type="HOGENOM" id="CLU_675459_0_0_2"/>
<dbReference type="OrthoDB" id="39189at2157"/>
<dbReference type="PhylomeDB" id="Q97B59"/>
<dbReference type="Proteomes" id="UP000001017">
    <property type="component" value="Chromosome"/>
</dbReference>
<dbReference type="GO" id="GO:0005737">
    <property type="term" value="C:cytoplasm"/>
    <property type="evidence" value="ECO:0007669"/>
    <property type="project" value="UniProtKB-SubCell"/>
</dbReference>
<dbReference type="GO" id="GO:0005524">
    <property type="term" value="F:ATP binding"/>
    <property type="evidence" value="ECO:0007669"/>
    <property type="project" value="UniProtKB-KW"/>
</dbReference>
<dbReference type="GO" id="GO:0016879">
    <property type="term" value="F:ligase activity, forming carbon-nitrogen bonds"/>
    <property type="evidence" value="ECO:0007669"/>
    <property type="project" value="UniProtKB-UniRule"/>
</dbReference>
<dbReference type="GO" id="GO:0002101">
    <property type="term" value="P:tRNA wobble cytosine modification"/>
    <property type="evidence" value="ECO:0007669"/>
    <property type="project" value="UniProtKB-UniRule"/>
</dbReference>
<dbReference type="CDD" id="cd04482">
    <property type="entry name" value="RPA2_OBF_like"/>
    <property type="match status" value="1"/>
</dbReference>
<dbReference type="Gene3D" id="2.40.50.1010">
    <property type="match status" value="1"/>
</dbReference>
<dbReference type="Gene3D" id="3.30.70.2200">
    <property type="match status" value="1"/>
</dbReference>
<dbReference type="Gene3D" id="3.90.600.20">
    <property type="match status" value="1"/>
</dbReference>
<dbReference type="HAMAP" id="MF_01892">
    <property type="entry name" value="tRNA_Ile2_agm2C_synt"/>
    <property type="match status" value="1"/>
</dbReference>
<dbReference type="InterPro" id="IPR053870">
    <property type="entry name" value="TiaS-like_TCKD"/>
</dbReference>
<dbReference type="InterPro" id="IPR013696">
    <property type="entry name" value="TiaS_FLD"/>
</dbReference>
<dbReference type="InterPro" id="IPR024913">
    <property type="entry name" value="tRNA_Ile2__agm2C_synt"/>
</dbReference>
<dbReference type="InterPro" id="IPR055394">
    <property type="entry name" value="Zn_ribbon_TiaS"/>
</dbReference>
<dbReference type="PANTHER" id="PTHR40705:SF2">
    <property type="entry name" value="DUF1743 DOMAIN-CONTAINING PROTEIN"/>
    <property type="match status" value="1"/>
</dbReference>
<dbReference type="PANTHER" id="PTHR40705">
    <property type="entry name" value="TRNA(ILE2) 2-AGMATINYLCYTIDINE SYNTHETASE TIAS"/>
    <property type="match status" value="1"/>
</dbReference>
<dbReference type="Pfam" id="PF08489">
    <property type="entry name" value="TiaS_FLD"/>
    <property type="match status" value="1"/>
</dbReference>
<dbReference type="Pfam" id="PF22641">
    <property type="entry name" value="TiaS_TCKD"/>
    <property type="match status" value="1"/>
</dbReference>
<dbReference type="Pfam" id="PF23783">
    <property type="entry name" value="Zn_ribbon_TiaS"/>
    <property type="match status" value="1"/>
</dbReference>
<name>TIAS_THEVO</name>
<reference key="1">
    <citation type="journal article" date="2000" name="Proc. Natl. Acad. Sci. U.S.A.">
        <title>Archaeal adaptation to higher temperatures revealed by genomic sequence of Thermoplasma volcanium.</title>
        <authorList>
            <person name="Kawashima T."/>
            <person name="Amano N."/>
            <person name="Koike H."/>
            <person name="Makino S."/>
            <person name="Higuchi S."/>
            <person name="Kawashima-Ohya Y."/>
            <person name="Watanabe K."/>
            <person name="Yamazaki M."/>
            <person name="Kanehori K."/>
            <person name="Kawamoto T."/>
            <person name="Nunoshiba T."/>
            <person name="Yamamoto Y."/>
            <person name="Aramaki H."/>
            <person name="Makino K."/>
            <person name="Suzuki M."/>
        </authorList>
    </citation>
    <scope>NUCLEOTIDE SEQUENCE [LARGE SCALE GENOMIC DNA]</scope>
    <source>
        <strain>ATCC 51530 / DSM 4299 / JCM 9571 / NBRC 15438 / GSS1</strain>
    </source>
</reference>
<sequence>MFLAFDDTDSPSGMCTTYLMEEFLRKVNLDVIGYPRLVRLNPNIRYKTRGNGALSVHLGRGIGKKHTIGELHGKILYGYAEGEDEYDENVLYVMKDLVEKYSELDYFNTNPGIVVSKNPFPENYYWSALEREIRIEEAENFITENNGKFLKFKSGRGIIGSGAAISWPATRTTYEILAYKYPHPEEIETEKKMRLSILADTFRGTFNNVDIANKYPAIFPNPKTPVIFGIRGLYPSVLANAAKKVIDDGSINYDSTVTYLTNQATDDHIIDEPNVIEDLHSYKITAEIIDKPFSVAGGHYFVRSISRAGEFTAAAFEPTKEFRHTFSKLMPGDTVTFYGSFTNGNLNVEKMQIISVSRVFSRVTPLCKFCNTRTKSKGKNDFRCPKCGRRYNTPDYHEVKREISPGKYDVPVVARRHLSMPFEIESMFKTKINALEA</sequence>
<evidence type="ECO:0000255" key="1">
    <source>
        <dbReference type="HAMAP-Rule" id="MF_01892"/>
    </source>
</evidence>
<comment type="function">
    <text evidence="1">ATP-dependent agmatine transferase that catalyzes the formation of 2-agmatinylcytidine (agm2C) at the wobble position (C34) of tRNA(Ile2), converting the codon specificity from AUG to AUA.</text>
</comment>
<comment type="catalytic activity">
    <reaction evidence="1">
        <text>cytidine(34) in tRNA(Ile2) + agmatine + ATP + H2O = 2-agmatinylcytidine(34) in tRNA(Ile2) + AMP + 2 phosphate + 2 H(+)</text>
        <dbReference type="Rhea" id="RHEA:43608"/>
        <dbReference type="Rhea" id="RHEA-COMP:10625"/>
        <dbReference type="Rhea" id="RHEA-COMP:10626"/>
        <dbReference type="ChEBI" id="CHEBI:15377"/>
        <dbReference type="ChEBI" id="CHEBI:15378"/>
        <dbReference type="ChEBI" id="CHEBI:30616"/>
        <dbReference type="ChEBI" id="CHEBI:43474"/>
        <dbReference type="ChEBI" id="CHEBI:58145"/>
        <dbReference type="ChEBI" id="CHEBI:82748"/>
        <dbReference type="ChEBI" id="CHEBI:83545"/>
        <dbReference type="ChEBI" id="CHEBI:456215"/>
        <dbReference type="EC" id="6.3.4.22"/>
    </reaction>
</comment>
<comment type="subcellular location">
    <subcellularLocation>
        <location evidence="1">Cytoplasm</location>
    </subcellularLocation>
</comment>
<comment type="similarity">
    <text evidence="1">Belongs to the TiaS family.</text>
</comment>
<gene>
    <name evidence="1" type="primary">tiaS</name>
    <name type="ordered locus">TV0599</name>
    <name type="ORF">TVG0590669</name>
</gene>